<keyword id="KW-1015">Disulfide bond</keyword>
<keyword id="KW-0281">Fimbrium</keyword>
<keyword id="KW-0472">Membrane</keyword>
<keyword id="KW-0488">Methylation</keyword>
<keyword id="KW-1185">Reference proteome</keyword>
<keyword id="KW-0812">Transmembrane</keyword>
<keyword id="KW-1133">Transmembrane helix</keyword>
<sequence>MKSLQKGFTLIELMIVVAIIGILAAFAIPAYNDYIARTQVSEGVSLADGLKIRIADNLQDGKCTSEGDPASGEVGNTDMGKYALATIEGTPDANLAGLTPKDPNGCKVKIEYGKGTAGDNISPLIKGQMLVLNQLVNGSYDKDSSSTVKPKFLPKALKEATP</sequence>
<reference key="1">
    <citation type="journal article" date="2007" name="Nat. Biotechnol.">
        <title>Genome sequence and identification of candidate vaccine antigens from the animal pathogen Dichelobacter nodosus.</title>
        <authorList>
            <person name="Myers G.S.A."/>
            <person name="Parker D."/>
            <person name="Al-Hasani K."/>
            <person name="Kennan R.M."/>
            <person name="Seemann T."/>
            <person name="Ren Q."/>
            <person name="Badger J.H."/>
            <person name="Selengut J.D."/>
            <person name="Deboy R.T."/>
            <person name="Tettelin H."/>
            <person name="Boyce J.D."/>
            <person name="McCarl V.P."/>
            <person name="Han X."/>
            <person name="Nelson W.C."/>
            <person name="Madupu R."/>
            <person name="Mohamoud Y."/>
            <person name="Holley T."/>
            <person name="Fedorova N."/>
            <person name="Khouri H."/>
            <person name="Bottomley S.P."/>
            <person name="Whittington R.J."/>
            <person name="Adler B."/>
            <person name="Songer J.G."/>
            <person name="Rood J.I."/>
            <person name="Paulsen I.T."/>
        </authorList>
    </citation>
    <scope>NUCLEOTIDE SEQUENCE [LARGE SCALE GENOMIC DNA]</scope>
    <source>
        <strain>VCS1703A</strain>
    </source>
</reference>
<reference key="2">
    <citation type="journal article" date="2001" name="J. Bacteriol.">
        <title>The type IV fimbrial subunit gene (fimA) of Dichelobacter nodosus is essential for virulence, protease secretion, and natural competence.</title>
        <authorList>
            <person name="Kennan R.M."/>
            <person name="Dhungyel O.P."/>
            <person name="Whittington R.J."/>
            <person name="Egerton J.R."/>
            <person name="Rood J.I."/>
        </authorList>
    </citation>
    <scope>FUNCTION</scope>
    <scope>DISRUPTION PHENOTYPE</scope>
</reference>
<reference key="3">
    <citation type="journal article" date="2006" name="J. Bacteriol.">
        <title>Regulation of type IV fimbrial biogenesis in Dichelobacter nodosus.</title>
        <authorList>
            <person name="Parker D."/>
            <person name="Kennan R.M."/>
            <person name="Myers G.S."/>
            <person name="Paulsen I.T."/>
            <person name="Songer J.G."/>
            <person name="Rood J.I."/>
        </authorList>
    </citation>
    <scope>INDUCTION BY RPON AND PILR</scope>
    <source>
        <strain>VCS1703A</strain>
    </source>
</reference>
<reference key="4">
    <citation type="journal article" date="2007" name="J. Bacteriol.">
        <title>Type IV fimbrial biogenesis is required for protease secretion and natural transformation in Dichelobacter nodosus.</title>
        <authorList>
            <person name="Han X."/>
            <person name="Kennan R.M."/>
            <person name="Parker D."/>
            <person name="Davies J.K."/>
            <person name="Rood J.I."/>
        </authorList>
    </citation>
    <scope>FUNCTION</scope>
    <source>
        <strain>VCS1703A</strain>
    </source>
</reference>
<reference key="5">
    <citation type="journal article" date="2008" name="J. Bacteriol.">
        <title>Twitching motility is essential for virulence in Dichelobacter nodosus.</title>
        <authorList>
            <person name="Han X."/>
            <person name="Kennan R.M."/>
            <person name="Davies J.K."/>
            <person name="Reddacliff L.A."/>
            <person name="Dhungyel O.P."/>
            <person name="Whittington R.J."/>
            <person name="Turnbull L."/>
            <person name="Whitchurch C.B."/>
            <person name="Rood J.I."/>
        </authorList>
    </citation>
    <scope>SUBCELLULAR LOCATION</scope>
    <scope>FUNCTION</scope>
    <source>
        <strain>VCS1703A</strain>
    </source>
</reference>
<dbReference type="EMBL" id="CP000513">
    <property type="protein sequence ID" value="ABQ13217.1"/>
    <property type="molecule type" value="Genomic_DNA"/>
</dbReference>
<dbReference type="RefSeq" id="WP_011927861.1">
    <property type="nucleotide sequence ID" value="NC_009446.1"/>
</dbReference>
<dbReference type="SMR" id="A5EWR9"/>
<dbReference type="STRING" id="246195.DNO_0110"/>
<dbReference type="KEGG" id="dno:DNO_0110"/>
<dbReference type="eggNOG" id="COG4969">
    <property type="taxonomic scope" value="Bacteria"/>
</dbReference>
<dbReference type="HOGENOM" id="CLU_091705_4_2_6"/>
<dbReference type="OrthoDB" id="5767514at2"/>
<dbReference type="Proteomes" id="UP000000248">
    <property type="component" value="Chromosome"/>
</dbReference>
<dbReference type="GO" id="GO:0016020">
    <property type="term" value="C:membrane"/>
    <property type="evidence" value="ECO:0007669"/>
    <property type="project" value="UniProtKB-SubCell"/>
</dbReference>
<dbReference type="GO" id="GO:0009289">
    <property type="term" value="C:pilus"/>
    <property type="evidence" value="ECO:0007669"/>
    <property type="project" value="UniProtKB-SubCell"/>
</dbReference>
<dbReference type="GO" id="GO:0015627">
    <property type="term" value="C:type II protein secretion system complex"/>
    <property type="evidence" value="ECO:0007669"/>
    <property type="project" value="InterPro"/>
</dbReference>
<dbReference type="GO" id="GO:0007155">
    <property type="term" value="P:cell adhesion"/>
    <property type="evidence" value="ECO:0007669"/>
    <property type="project" value="InterPro"/>
</dbReference>
<dbReference type="GO" id="GO:0015628">
    <property type="term" value="P:protein secretion by the type II secretion system"/>
    <property type="evidence" value="ECO:0007669"/>
    <property type="project" value="InterPro"/>
</dbReference>
<dbReference type="Gene3D" id="3.30.700.10">
    <property type="entry name" value="Glycoprotein, Type 4 Pilin"/>
    <property type="match status" value="1"/>
</dbReference>
<dbReference type="InterPro" id="IPR012902">
    <property type="entry name" value="N_methyl_site"/>
</dbReference>
<dbReference type="InterPro" id="IPR001082">
    <property type="entry name" value="Pilin"/>
</dbReference>
<dbReference type="InterPro" id="IPR045584">
    <property type="entry name" value="Pilin-like"/>
</dbReference>
<dbReference type="InterPro" id="IPR002416">
    <property type="entry name" value="T2SS_protein-GspH"/>
</dbReference>
<dbReference type="InterPro" id="IPR050470">
    <property type="entry name" value="T4P/T2SS_Core"/>
</dbReference>
<dbReference type="NCBIfam" id="TIGR02532">
    <property type="entry name" value="IV_pilin_GFxxxE"/>
    <property type="match status" value="1"/>
</dbReference>
<dbReference type="PANTHER" id="PTHR30093">
    <property type="entry name" value="GENERAL SECRETION PATHWAY PROTEIN G"/>
    <property type="match status" value="1"/>
</dbReference>
<dbReference type="PANTHER" id="PTHR30093:SF34">
    <property type="entry name" value="PREPILIN PEPTIDASE-DEPENDENT PROTEIN D"/>
    <property type="match status" value="1"/>
</dbReference>
<dbReference type="Pfam" id="PF07963">
    <property type="entry name" value="N_methyl"/>
    <property type="match status" value="1"/>
</dbReference>
<dbReference type="Pfam" id="PF00114">
    <property type="entry name" value="Pilin"/>
    <property type="match status" value="1"/>
</dbReference>
<dbReference type="PRINTS" id="PR00885">
    <property type="entry name" value="BCTERIALGSPH"/>
</dbReference>
<dbReference type="SUPFAM" id="SSF54523">
    <property type="entry name" value="Pili subunits"/>
    <property type="match status" value="1"/>
</dbReference>
<dbReference type="PROSITE" id="PS00409">
    <property type="entry name" value="PROKAR_NTER_METHYL"/>
    <property type="match status" value="1"/>
</dbReference>
<proteinExistence type="evidence at transcript level"/>
<evidence type="ECO:0000250" key="1">
    <source>
        <dbReference type="UniProtKB" id="P02975"/>
    </source>
</evidence>
<evidence type="ECO:0000255" key="2"/>
<evidence type="ECO:0000255" key="3">
    <source>
        <dbReference type="PROSITE-ProRule" id="PRU01070"/>
    </source>
</evidence>
<evidence type="ECO:0000269" key="4">
    <source>
    </source>
</evidence>
<evidence type="ECO:0000269" key="5">
    <source>
    </source>
</evidence>
<evidence type="ECO:0000269" key="6">
    <source>
    </source>
</evidence>
<evidence type="ECO:0000269" key="7">
    <source>
    </source>
</evidence>
<evidence type="ECO:0000305" key="8"/>
<accession>A5EWR9</accession>
<feature type="propeptide" id="PRO_0000450771" description="Leader sequence" evidence="3">
    <location>
        <begin position="1"/>
        <end position="7"/>
    </location>
</feature>
<feature type="chain" id="PRO_0000450772" description="Type IV major fimbrial protein FimA" evidence="3">
    <location>
        <begin position="8"/>
        <end position="162"/>
    </location>
</feature>
<feature type="transmembrane region" description="Helical" evidence="2">
    <location>
        <begin position="8"/>
        <end position="28"/>
    </location>
</feature>
<feature type="modified residue" description="N-methylphenylalanine" evidence="3">
    <location>
        <position position="8"/>
    </location>
</feature>
<feature type="disulfide bond" evidence="1">
    <location>
        <begin position="63"/>
        <end position="106"/>
    </location>
</feature>
<organism>
    <name type="scientific">Dichelobacter nodosus (strain VCS1703A)</name>
    <dbReference type="NCBI Taxonomy" id="246195"/>
    <lineage>
        <taxon>Bacteria</taxon>
        <taxon>Pseudomonadati</taxon>
        <taxon>Pseudomonadota</taxon>
        <taxon>Gammaproteobacteria</taxon>
        <taxon>Cardiobacteriales</taxon>
        <taxon>Cardiobacteriaceae</taxon>
        <taxon>Dichelobacter</taxon>
    </lineage>
</organism>
<protein>
    <recommendedName>
        <fullName>Type IV major fimbrial protein FimA</fullName>
    </recommendedName>
</protein>
<comment type="function">
    <text evidence="4 6 7">Major component of the type IV fimbriae that plays an essential role in twitching motility, natural transformation, and protease secretion.</text>
</comment>
<comment type="subcellular location">
    <subcellularLocation>
        <location evidence="7">Fimbrium</location>
    </subcellularLocation>
    <subcellularLocation>
        <location evidence="2">Membrane</location>
        <topology evidence="2">Single-pass membrane protein</topology>
    </subcellularLocation>
</comment>
<comment type="induction">
    <text evidence="5">By PilR (PilR/S system) and RNA polymerase sigma-54 factor/RpoN.</text>
</comment>
<comment type="disruption phenotype">
    <text evidence="4">Deletion mutants do not colonize the ovine hoof. Mutants show also altered secretion of extracellular proteases and twitching motility.</text>
</comment>
<comment type="similarity">
    <text evidence="8">Belongs to the N-Me-Phe pilin family.</text>
</comment>
<name>FIMA_DICNV</name>
<gene>
    <name type="primary">fimA</name>
    <name type="ordered locus">DNO_0110</name>
</gene>